<gene>
    <name evidence="1" type="primary">rplI</name>
    <name type="ordered locus">Sbal223_0735</name>
</gene>
<accession>B8E9N9</accession>
<dbReference type="EMBL" id="CP001252">
    <property type="protein sequence ID" value="ACK45254.1"/>
    <property type="molecule type" value="Genomic_DNA"/>
</dbReference>
<dbReference type="RefSeq" id="WP_006086059.1">
    <property type="nucleotide sequence ID" value="NC_011663.1"/>
</dbReference>
<dbReference type="SMR" id="B8E9N9"/>
<dbReference type="GeneID" id="11771054"/>
<dbReference type="KEGG" id="sbp:Sbal223_0735"/>
<dbReference type="HOGENOM" id="CLU_078938_4_1_6"/>
<dbReference type="Proteomes" id="UP000002507">
    <property type="component" value="Chromosome"/>
</dbReference>
<dbReference type="GO" id="GO:1990904">
    <property type="term" value="C:ribonucleoprotein complex"/>
    <property type="evidence" value="ECO:0007669"/>
    <property type="project" value="UniProtKB-KW"/>
</dbReference>
<dbReference type="GO" id="GO:0005840">
    <property type="term" value="C:ribosome"/>
    <property type="evidence" value="ECO:0007669"/>
    <property type="project" value="UniProtKB-KW"/>
</dbReference>
<dbReference type="GO" id="GO:0019843">
    <property type="term" value="F:rRNA binding"/>
    <property type="evidence" value="ECO:0007669"/>
    <property type="project" value="UniProtKB-UniRule"/>
</dbReference>
<dbReference type="GO" id="GO:0003735">
    <property type="term" value="F:structural constituent of ribosome"/>
    <property type="evidence" value="ECO:0007669"/>
    <property type="project" value="InterPro"/>
</dbReference>
<dbReference type="GO" id="GO:0006412">
    <property type="term" value="P:translation"/>
    <property type="evidence" value="ECO:0007669"/>
    <property type="project" value="UniProtKB-UniRule"/>
</dbReference>
<dbReference type="FunFam" id="3.10.430.100:FF:000001">
    <property type="entry name" value="50S ribosomal protein L9"/>
    <property type="match status" value="1"/>
</dbReference>
<dbReference type="FunFam" id="3.40.5.10:FF:000001">
    <property type="entry name" value="50S ribosomal protein L9"/>
    <property type="match status" value="1"/>
</dbReference>
<dbReference type="Gene3D" id="3.10.430.100">
    <property type="entry name" value="Ribosomal protein L9, C-terminal domain"/>
    <property type="match status" value="1"/>
</dbReference>
<dbReference type="Gene3D" id="3.40.5.10">
    <property type="entry name" value="Ribosomal protein L9, N-terminal domain"/>
    <property type="match status" value="1"/>
</dbReference>
<dbReference type="HAMAP" id="MF_00503">
    <property type="entry name" value="Ribosomal_bL9"/>
    <property type="match status" value="1"/>
</dbReference>
<dbReference type="InterPro" id="IPR000244">
    <property type="entry name" value="Ribosomal_bL9"/>
</dbReference>
<dbReference type="InterPro" id="IPR009027">
    <property type="entry name" value="Ribosomal_bL9/RNase_H1_N"/>
</dbReference>
<dbReference type="InterPro" id="IPR020594">
    <property type="entry name" value="Ribosomal_bL9_bac/chp"/>
</dbReference>
<dbReference type="InterPro" id="IPR020069">
    <property type="entry name" value="Ribosomal_bL9_C"/>
</dbReference>
<dbReference type="InterPro" id="IPR036791">
    <property type="entry name" value="Ribosomal_bL9_C_sf"/>
</dbReference>
<dbReference type="InterPro" id="IPR020070">
    <property type="entry name" value="Ribosomal_bL9_N"/>
</dbReference>
<dbReference type="InterPro" id="IPR036935">
    <property type="entry name" value="Ribosomal_bL9_N_sf"/>
</dbReference>
<dbReference type="NCBIfam" id="TIGR00158">
    <property type="entry name" value="L9"/>
    <property type="match status" value="1"/>
</dbReference>
<dbReference type="PANTHER" id="PTHR21368">
    <property type="entry name" value="50S RIBOSOMAL PROTEIN L9"/>
    <property type="match status" value="1"/>
</dbReference>
<dbReference type="Pfam" id="PF03948">
    <property type="entry name" value="Ribosomal_L9_C"/>
    <property type="match status" value="1"/>
</dbReference>
<dbReference type="Pfam" id="PF01281">
    <property type="entry name" value="Ribosomal_L9_N"/>
    <property type="match status" value="1"/>
</dbReference>
<dbReference type="SUPFAM" id="SSF55658">
    <property type="entry name" value="L9 N-domain-like"/>
    <property type="match status" value="1"/>
</dbReference>
<dbReference type="SUPFAM" id="SSF55653">
    <property type="entry name" value="Ribosomal protein L9 C-domain"/>
    <property type="match status" value="1"/>
</dbReference>
<dbReference type="PROSITE" id="PS00651">
    <property type="entry name" value="RIBOSOMAL_L9"/>
    <property type="match status" value="1"/>
</dbReference>
<proteinExistence type="inferred from homology"/>
<name>RL9_SHEB2</name>
<reference key="1">
    <citation type="submission" date="2008-12" db="EMBL/GenBank/DDBJ databases">
        <title>Complete sequence of chromosome of Shewanella baltica OS223.</title>
        <authorList>
            <consortium name="US DOE Joint Genome Institute"/>
            <person name="Lucas S."/>
            <person name="Copeland A."/>
            <person name="Lapidus A."/>
            <person name="Glavina del Rio T."/>
            <person name="Dalin E."/>
            <person name="Tice H."/>
            <person name="Bruce D."/>
            <person name="Goodwin L."/>
            <person name="Pitluck S."/>
            <person name="Chertkov O."/>
            <person name="Meincke L."/>
            <person name="Brettin T."/>
            <person name="Detter J.C."/>
            <person name="Han C."/>
            <person name="Kuske C.R."/>
            <person name="Larimer F."/>
            <person name="Land M."/>
            <person name="Hauser L."/>
            <person name="Kyrpides N."/>
            <person name="Ovchinnikova G."/>
            <person name="Brettar I."/>
            <person name="Rodrigues J."/>
            <person name="Konstantinidis K."/>
            <person name="Tiedje J."/>
        </authorList>
    </citation>
    <scope>NUCLEOTIDE SEQUENCE [LARGE SCALE GENOMIC DNA]</scope>
    <source>
        <strain>OS223</strain>
    </source>
</reference>
<protein>
    <recommendedName>
        <fullName evidence="1">Large ribosomal subunit protein bL9</fullName>
    </recommendedName>
    <alternativeName>
        <fullName evidence="2">50S ribosomal protein L9</fullName>
    </alternativeName>
</protein>
<sequence length="150" mass="15677">MNVILLDKIANLGNLGDQVSVKAGYARNFLLPQGKAVVANESNVKVFEARRAELEAKLAAELAAANLRAEKITALEAVVIASKAGDEGKLFGSVGNRDIADAVTAAGVELAKSEVRLPLGALRTTGDFEVEVQLHTEVKAVVKVSVVAEA</sequence>
<feature type="chain" id="PRO_1000196263" description="Large ribosomal subunit protein bL9">
    <location>
        <begin position="1"/>
        <end position="150"/>
    </location>
</feature>
<keyword id="KW-0687">Ribonucleoprotein</keyword>
<keyword id="KW-0689">Ribosomal protein</keyword>
<keyword id="KW-0694">RNA-binding</keyword>
<keyword id="KW-0699">rRNA-binding</keyword>
<comment type="function">
    <text evidence="1">Binds to the 23S rRNA.</text>
</comment>
<comment type="similarity">
    <text evidence="1">Belongs to the bacterial ribosomal protein bL9 family.</text>
</comment>
<evidence type="ECO:0000255" key="1">
    <source>
        <dbReference type="HAMAP-Rule" id="MF_00503"/>
    </source>
</evidence>
<evidence type="ECO:0000305" key="2"/>
<organism>
    <name type="scientific">Shewanella baltica (strain OS223)</name>
    <dbReference type="NCBI Taxonomy" id="407976"/>
    <lineage>
        <taxon>Bacteria</taxon>
        <taxon>Pseudomonadati</taxon>
        <taxon>Pseudomonadota</taxon>
        <taxon>Gammaproteobacteria</taxon>
        <taxon>Alteromonadales</taxon>
        <taxon>Shewanellaceae</taxon>
        <taxon>Shewanella</taxon>
    </lineage>
</organism>